<proteinExistence type="evidence at protein level"/>
<keyword id="KW-0963">Cytoplasm</keyword>
<keyword id="KW-0408">Iron</keyword>
<keyword id="KW-0411">Iron-sulfur</keyword>
<keyword id="KW-0479">Metal-binding</keyword>
<keyword id="KW-0597">Phosphoprotein</keyword>
<keyword id="KW-1185">Reference proteome</keyword>
<keyword id="KW-0949">S-adenosyl-L-methionine</keyword>
<keyword id="KW-0808">Transferase</keyword>
<reference key="1">
    <citation type="journal article" date="1997" name="Nature">
        <title>The nucleotide sequence of Saccharomyces cerevisiae chromosome IX.</title>
        <authorList>
            <person name="Churcher C.M."/>
            <person name="Bowman S."/>
            <person name="Badcock K."/>
            <person name="Bankier A.T."/>
            <person name="Brown D."/>
            <person name="Chillingworth T."/>
            <person name="Connor R."/>
            <person name="Devlin K."/>
            <person name="Gentles S."/>
            <person name="Hamlin N."/>
            <person name="Harris D.E."/>
            <person name="Horsnell T."/>
            <person name="Hunt S."/>
            <person name="Jagels K."/>
            <person name="Jones M."/>
            <person name="Lye G."/>
            <person name="Moule S."/>
            <person name="Odell C."/>
            <person name="Pearson D."/>
            <person name="Rajandream M.A."/>
            <person name="Rice P."/>
            <person name="Rowley N."/>
            <person name="Skelton J."/>
            <person name="Smith V."/>
            <person name="Walsh S.V."/>
            <person name="Whitehead S."/>
            <person name="Barrell B.G."/>
        </authorList>
    </citation>
    <scope>NUCLEOTIDE SEQUENCE [LARGE SCALE GENOMIC DNA]</scope>
    <source>
        <strain>ATCC 204508 / S288c</strain>
    </source>
</reference>
<reference key="2">
    <citation type="journal article" date="2014" name="G3 (Bethesda)">
        <title>The reference genome sequence of Saccharomyces cerevisiae: Then and now.</title>
        <authorList>
            <person name="Engel S.R."/>
            <person name="Dietrich F.S."/>
            <person name="Fisk D.G."/>
            <person name="Binkley G."/>
            <person name="Balakrishnan R."/>
            <person name="Costanzo M.C."/>
            <person name="Dwight S.S."/>
            <person name="Hitz B.C."/>
            <person name="Karra K."/>
            <person name="Nash R.S."/>
            <person name="Weng S."/>
            <person name="Wong E.D."/>
            <person name="Lloyd P."/>
            <person name="Skrzypek M.S."/>
            <person name="Miyasato S.R."/>
            <person name="Simison M."/>
            <person name="Cherry J.M."/>
        </authorList>
    </citation>
    <scope>GENOME REANNOTATION</scope>
    <source>
        <strain>ATCC 204508 / S288c</strain>
    </source>
</reference>
<reference key="3">
    <citation type="journal article" date="2003" name="Mol. Microbiol.">
        <title>Elongator's toxin-target (TOT) function is nuclear localization sequence dependent and suppressed by post-translational modification.</title>
        <authorList>
            <person name="Fichtner L."/>
            <person name="Jablonowski D."/>
            <person name="Schierhorn A."/>
            <person name="Kitamoto H.K."/>
            <person name="Stark M.J.R."/>
            <person name="Schaffrath R."/>
        </authorList>
    </citation>
    <scope>INTERACTION WITH KTI11</scope>
</reference>
<reference key="4">
    <citation type="journal article" date="2003" name="Nature">
        <title>Global analysis of protein localization in budding yeast.</title>
        <authorList>
            <person name="Huh W.-K."/>
            <person name="Falvo J.V."/>
            <person name="Gerke L.C."/>
            <person name="Carroll A.S."/>
            <person name="Howson R.W."/>
            <person name="Weissman J.S."/>
            <person name="O'Shea E.K."/>
        </authorList>
    </citation>
    <scope>SUBCELLULAR LOCATION [LARGE SCALE ANALYSIS]</scope>
</reference>
<reference key="5">
    <citation type="journal article" date="2003" name="Nature">
        <title>Global analysis of protein expression in yeast.</title>
        <authorList>
            <person name="Ghaemmaghami S."/>
            <person name="Huh W.-K."/>
            <person name="Bower K."/>
            <person name="Howson R.W."/>
            <person name="Belle A."/>
            <person name="Dephoure N."/>
            <person name="O'Shea E.K."/>
            <person name="Weissman J.S."/>
        </authorList>
    </citation>
    <scope>LEVEL OF PROTEIN EXPRESSION [LARGE SCALE ANALYSIS]</scope>
</reference>
<reference key="6">
    <citation type="journal article" date="2004" name="Mol. Cell. Biol.">
        <title>Identification of the proteins required for biosynthesis of diphthamide, the target of bacterial ADP-ribosylating toxins on translation elongation factor 2.</title>
        <authorList>
            <person name="Liu S."/>
            <person name="Milne G.T."/>
            <person name="Kuremsky J.G."/>
            <person name="Fink G.R."/>
            <person name="Leppla S.H."/>
        </authorList>
    </citation>
    <scope>FUNCTION</scope>
    <scope>CATALYTIC ACTIVITY</scope>
    <scope>PATHWAY</scope>
    <scope>INTERACTION WITH DPH2</scope>
</reference>
<reference key="7">
    <citation type="journal article" date="2007" name="Proc. Natl. Acad. Sci. U.S.A.">
        <title>Analysis of phosphorylation sites on proteins from Saccharomyces cerevisiae by electron transfer dissociation (ETD) mass spectrometry.</title>
        <authorList>
            <person name="Chi A."/>
            <person name="Huttenhower C."/>
            <person name="Geer L.Y."/>
            <person name="Coon J.J."/>
            <person name="Syka J.E.P."/>
            <person name="Bai D.L."/>
            <person name="Shabanowitz J."/>
            <person name="Burke D.J."/>
            <person name="Troyanskaya O.G."/>
            <person name="Hunt D.F."/>
        </authorList>
    </citation>
    <scope>PHOSPHORYLATION [LARGE SCALE ANALYSIS] AT SER-44</scope>
    <scope>IDENTIFICATION BY MASS SPECTROMETRY [LARGE SCALE ANALYSIS]</scope>
</reference>
<reference key="8">
    <citation type="journal article" date="2008" name="Mol. Microbiol.">
        <title>A versatile partner of eukaryotic protein complexes that is involved in multiple biological processes: Kti11/Dph3.</title>
        <authorList>
            <person name="Baer C."/>
            <person name="Zabel R."/>
            <person name="Liu S."/>
            <person name="Stark M.J."/>
            <person name="Schaffrath R."/>
        </authorList>
    </citation>
    <scope>IDENTIFICATION IN THE 2-(3-AMINO-3-CARBOXYPROPYL)HISTIDINE SYNTHASE COMPLEX</scope>
    <scope>INTERACTION WITH KTI11</scope>
    <scope>DISRUPTION PHENOTYPE</scope>
</reference>
<reference key="9">
    <citation type="journal article" date="2013" name="Toxins">
        <title>Insights into diphthamide, key diphtheria toxin effector.</title>
        <authorList>
            <person name="Abdel-Fattah W."/>
            <person name="Scheidt V."/>
            <person name="Uthman S."/>
            <person name="Stark M.J."/>
            <person name="Schaffrath R."/>
        </authorList>
    </citation>
    <scope>IDENTIFICATION IN THE 2-(3-AMINO-3-CARBOXYPROPYL)HISTIDINE SYNTHASE COMPLEX</scope>
    <scope>INTERACTION WITH DPH2 AND KTI11</scope>
</reference>
<reference key="10">
    <citation type="journal article" date="2014" name="J. Am. Chem. Soc.">
        <title>Dph3 is an electron donor for Dph1-Dph2 in the first step of eukaryotic diphthamide biosynthesis.</title>
        <authorList>
            <person name="Dong M."/>
            <person name="Su X."/>
            <person name="Dzikovski B."/>
            <person name="Dando E.E."/>
            <person name="Zhu X."/>
            <person name="Du J."/>
            <person name="Freed J.H."/>
            <person name="Lin H."/>
        </authorList>
    </citation>
    <scope>FUNCTION</scope>
    <scope>CATALYTIC ACTIVITY</scope>
    <scope>COFACTOR</scope>
    <scope>IDENTIFICATION IN THE 2-(3-AMINO-3-CARBOXYPROPYL)HISTIDINE SYNTHASE COMPLEX</scope>
</reference>
<reference key="11">
    <citation type="journal article" date="2016" name="Nat. Chem. Biol.">
        <title>Cbr1 is a Dph3 reductase required for the tRNA wobble uridine modification.</title>
        <authorList>
            <person name="Lin Z."/>
            <person name="Dong M."/>
            <person name="Zhang Y."/>
            <person name="Lee E.A."/>
            <person name="Lin H."/>
        </authorList>
    </citation>
    <scope>FUNCTION</scope>
    <scope>IDENTIFICATION IN THE 2-(3-AMINO-3-CARBOXYPROPYL)HISTIDINE SYNTHASE COMPLEX</scope>
    <scope>INTERACTION WITH KTI11</scope>
    <scope>IDENTIFICATION BY MASS SPECTROMETRY</scope>
</reference>
<reference key="12">
    <citation type="journal article" date="2019" name="J. Biol. Inorg. Chem.">
        <title>The asymmetric function of Dph1-Dph2 heterodimer in diphthamide biosynthesis.</title>
        <authorList>
            <person name="Dong M."/>
            <person name="Dando E.E."/>
            <person name="Kotliar I."/>
            <person name="Su X."/>
            <person name="Dzikovski B."/>
            <person name="Freed J.H."/>
            <person name="Lin H."/>
        </authorList>
    </citation>
    <scope>FUNCTION</scope>
    <scope>CATALYTIC ACTIVITY</scope>
    <scope>COFACTOR</scope>
    <scope>IDENTIFICATION IN THE 2-(3-AMINO-3-CARBOXYPROPYL)HISTIDINE SYNTHASE COMPLEX</scope>
    <scope>INTERACTION WITH DPH2</scope>
    <scope>MUTAGENESIS OF CYS-133; CYS-239 AND CYS-368</scope>
</reference>
<reference key="13">
    <citation type="journal article" date="2021" name="J. Am. Chem. Soc.">
        <title>Dph3 Enables Aerobic Diphthamide Biosynthesis by Donating One Iron Atom to Transform a [3Fe-4S] to a [4Fe-4S] Cluster in Dph1-Dph2.</title>
        <authorList>
            <person name="Zhang Y."/>
            <person name="Su D."/>
            <person name="Dzikovski B."/>
            <person name="Majer S.H."/>
            <person name="Coleman R."/>
            <person name="Chandrasekaran S."/>
            <person name="Fenwick M.K."/>
            <person name="Crane B.R."/>
            <person name="Lancaster K.M."/>
            <person name="Freed J.H."/>
            <person name="Lin H."/>
        </authorList>
    </citation>
    <scope>FUNCTION</scope>
</reference>
<protein>
    <recommendedName>
        <fullName evidence="13">2-(3-amino-3-carboxypropyl)histidine synthase subunit 1</fullName>
        <ecNumber evidence="9 14 16">2.5.1.108</ecNumber>
    </recommendedName>
    <alternativeName>
        <fullName>Diphthamide biosynthesis protein 1</fullName>
    </alternativeName>
    <alternativeName>
        <fullName evidence="13">Diphtheria toxin resistance protein 1</fullName>
    </alternativeName>
    <alternativeName>
        <fullName evidence="13">S-adenosyl-L-methionine:L-histidine 3-amino-3-carboxypropyltransferase 1</fullName>
    </alternativeName>
</protein>
<feature type="chain" id="PRO_0000083381" description="2-(3-amino-3-carboxypropyl)histidine synthase subunit 1">
    <location>
        <begin position="1"/>
        <end position="425"/>
    </location>
</feature>
<feature type="region of interest" description="Required for function but dispensable for interaction with DPH2 and DPH3" evidence="8">
    <location>
        <begin position="1"/>
        <end position="60"/>
    </location>
</feature>
<feature type="region of interest" description="Disordered" evidence="2">
    <location>
        <begin position="1"/>
        <end position="29"/>
    </location>
</feature>
<feature type="region of interest" description="Required for function but dispensable for interaction with DPH2 and DPH3" evidence="8">
    <location>
        <begin position="366"/>
        <end position="425"/>
    </location>
</feature>
<feature type="compositionally biased region" description="Polar residues" evidence="2">
    <location>
        <begin position="20"/>
        <end position="29"/>
    </location>
</feature>
<feature type="binding site" evidence="1">
    <location>
        <position position="133"/>
    </location>
    <ligand>
        <name>[4Fe-4S] cluster</name>
        <dbReference type="ChEBI" id="CHEBI:49883"/>
    </ligand>
</feature>
<feature type="binding site" evidence="1">
    <location>
        <position position="239"/>
    </location>
    <ligand>
        <name>[4Fe-4S] cluster</name>
        <dbReference type="ChEBI" id="CHEBI:49883"/>
    </ligand>
</feature>
<feature type="binding site" evidence="1">
    <location>
        <position position="368"/>
    </location>
    <ligand>
        <name>[4Fe-4S] cluster</name>
        <dbReference type="ChEBI" id="CHEBI:49883"/>
    </ligand>
</feature>
<feature type="modified residue" description="Phosphoserine" evidence="17">
    <location>
        <position position="44"/>
    </location>
</feature>
<feature type="mutagenesis site" description="Resistance to diphtheria toxin." evidence="11">
    <original>C</original>
    <variation>A</variation>
    <variation>S</variation>
    <location>
        <position position="133"/>
    </location>
</feature>
<feature type="mutagenesis site" description="Resistance to diphtheria toxin. Abolishes [4Fe-4S] cluster binding and catalytic activity; when associated with S-368." evidence="11">
    <original>C</original>
    <variation>A</variation>
    <variation>S</variation>
    <location>
        <position position="239"/>
    </location>
</feature>
<feature type="mutagenesis site" description="Resistance to diphtheria toxin. Abolishes [4Fe-4S] cluster binding and catalytic activity; when associated with S-239." evidence="11">
    <original>C</original>
    <variation>A</variation>
    <variation>S</variation>
    <location>
        <position position="368"/>
    </location>
</feature>
<comment type="function">
    <text evidence="6 9 10 11 12">Catalyzes the first step of diphthamide biosynthesis, a post-translational modification of histidine which occurs in elongation factor 2 (PubMed:15485916, PubMed:24422557, PubMed:27694803, PubMed:31463593, PubMed:34154323). In association with DPH2, transfers a 3-amino-3-carboxypropyl (ACP) group from S-adenosyl-L-methionine (SAM) to a histidine residue, the reaction is assisted by a reduction system comprising KTI11/DPH3 and a NADH-dependent reductase, predominantly CBR1 (PubMed:15485916, PubMed:24422557, PubMed:27694803, PubMed:31463593, PubMed:34154323).</text>
</comment>
<comment type="catalytic activity">
    <reaction evidence="9 14 16">
        <text>L-histidyl-[translation elongation factor 2] + S-adenosyl-L-methionine = 2-[(3S)-amino-3-carboxypropyl]-L-histidyl-[translation elongation factor 2] + S-methyl-5'-thioadenosine + H(+)</text>
        <dbReference type="Rhea" id="RHEA:36783"/>
        <dbReference type="Rhea" id="RHEA-COMP:9748"/>
        <dbReference type="Rhea" id="RHEA-COMP:9749"/>
        <dbReference type="ChEBI" id="CHEBI:15378"/>
        <dbReference type="ChEBI" id="CHEBI:17509"/>
        <dbReference type="ChEBI" id="CHEBI:29979"/>
        <dbReference type="ChEBI" id="CHEBI:59789"/>
        <dbReference type="ChEBI" id="CHEBI:73995"/>
        <dbReference type="EC" id="2.5.1.108"/>
    </reaction>
</comment>
<comment type="cofactor">
    <cofactor evidence="11 15">
        <name>[4Fe-4S] cluster</name>
        <dbReference type="ChEBI" id="CHEBI:49883"/>
    </cofactor>
    <text evidence="11">Binds 1 [4Fe-4S] cluster per subunit. The cluster is coordinated with 3 cysteines and an exchangeable S-adenosyl-L-methionine.</text>
</comment>
<comment type="pathway">
    <text evidence="14">Protein modification; peptidyl-diphthamide biosynthesis.</text>
</comment>
<comment type="subunit">
    <text evidence="3 6 7 8 9 10 11">Component of the 2-(3-amino-3-carboxypropyl)histidine synthase complex composed of DPH1, DPH2, KTI11/DPH3 and a NADH-dependent reductase, predominantly CBR1 (PubMed:15485916, PubMed:18627462, PubMed:23645155, PubMed:24422557, PubMed:27694803, PubMed:31463593). Interacts with DPH2; the interaction is direct (PubMed:15485916, PubMed:23645155, PubMed:31463593). Interacts with KTI11/DPH3 (PubMed:12940988, PubMed:18627462, PubMed:23645155, PubMed:27694803).</text>
</comment>
<comment type="interaction">
    <interactant intactId="EBI-25162">
        <id>P40487</id>
    </interactant>
    <interactant intactId="EBI-6090">
        <id>P32461</id>
        <label>DPH2</label>
    </interactant>
    <organismsDiffer>false</organismsDiffer>
    <experiments>4</experiments>
</comment>
<comment type="interaction">
    <interactant intactId="EBI-25162">
        <id>P40487</id>
    </interactant>
    <interactant intactId="EBI-2055307">
        <id>Q3E840</id>
        <label>KTI11</label>
    </interactant>
    <organismsDiffer>false</organismsDiffer>
    <experiments>2</experiments>
</comment>
<comment type="subcellular location">
    <subcellularLocation>
        <location evidence="4">Cytoplasm</location>
    </subcellularLocation>
</comment>
<comment type="disruption phenotype">
    <text evidence="7">Increases translational -1 frameshifting (PubMed:18627462). Abolishes the formation of the 2-(3-amino-3-carboxypropyl)histidine synthase complex (PubMed:18627462). Resistance to sordarin and zymocin (PubMed:18627462).</text>
</comment>
<comment type="miscellaneous">
    <text evidence="5">Present with 2526 molecules/cell in log phase SD medium.</text>
</comment>
<comment type="similarity">
    <text evidence="13">Belongs to the DPH1/DPH2 family. DPH1 subfamily.</text>
</comment>
<organism>
    <name type="scientific">Saccharomyces cerevisiae (strain ATCC 204508 / S288c)</name>
    <name type="common">Baker's yeast</name>
    <dbReference type="NCBI Taxonomy" id="559292"/>
    <lineage>
        <taxon>Eukaryota</taxon>
        <taxon>Fungi</taxon>
        <taxon>Dikarya</taxon>
        <taxon>Ascomycota</taxon>
        <taxon>Saccharomycotina</taxon>
        <taxon>Saccharomycetes</taxon>
        <taxon>Saccharomycetales</taxon>
        <taxon>Saccharomycetaceae</taxon>
        <taxon>Saccharomyces</taxon>
    </lineage>
</organism>
<evidence type="ECO:0000250" key="1">
    <source>
        <dbReference type="UniProtKB" id="O58832"/>
    </source>
</evidence>
<evidence type="ECO:0000256" key="2">
    <source>
        <dbReference type="SAM" id="MobiDB-lite"/>
    </source>
</evidence>
<evidence type="ECO:0000269" key="3">
    <source>
    </source>
</evidence>
<evidence type="ECO:0000269" key="4">
    <source>
    </source>
</evidence>
<evidence type="ECO:0000269" key="5">
    <source>
    </source>
</evidence>
<evidence type="ECO:0000269" key="6">
    <source>
    </source>
</evidence>
<evidence type="ECO:0000269" key="7">
    <source>
    </source>
</evidence>
<evidence type="ECO:0000269" key="8">
    <source>
    </source>
</evidence>
<evidence type="ECO:0000269" key="9">
    <source>
    </source>
</evidence>
<evidence type="ECO:0000269" key="10">
    <source>
    </source>
</evidence>
<evidence type="ECO:0000269" key="11">
    <source>
    </source>
</evidence>
<evidence type="ECO:0000269" key="12">
    <source>
    </source>
</evidence>
<evidence type="ECO:0000305" key="13"/>
<evidence type="ECO:0000305" key="14">
    <source>
    </source>
</evidence>
<evidence type="ECO:0000305" key="15">
    <source>
    </source>
</evidence>
<evidence type="ECO:0000305" key="16">
    <source>
    </source>
</evidence>
<evidence type="ECO:0007744" key="17">
    <source>
    </source>
</evidence>
<dbReference type="EC" id="2.5.1.108" evidence="9 14 16"/>
<dbReference type="EMBL" id="Z38125">
    <property type="protein sequence ID" value="CAA86277.1"/>
    <property type="molecule type" value="Genomic_DNA"/>
</dbReference>
<dbReference type="EMBL" id="BK006942">
    <property type="protein sequence ID" value="DAA08450.1"/>
    <property type="molecule type" value="Genomic_DNA"/>
</dbReference>
<dbReference type="PIR" id="S48469">
    <property type="entry name" value="S48469"/>
</dbReference>
<dbReference type="RefSeq" id="NP_012163.1">
    <property type="nucleotide sequence ID" value="NM_001179451.1"/>
</dbReference>
<dbReference type="SMR" id="P40487"/>
<dbReference type="BioGRID" id="34888">
    <property type="interactions" value="83"/>
</dbReference>
<dbReference type="ComplexPortal" id="CPX-2581">
    <property type="entry name" value="2-(3-amino-3-carboxypropyl)histidine synthase complex"/>
</dbReference>
<dbReference type="DIP" id="DIP-5653N"/>
<dbReference type="FunCoup" id="P40487">
    <property type="interactions" value="728"/>
</dbReference>
<dbReference type="IntAct" id="P40487">
    <property type="interactions" value="14"/>
</dbReference>
<dbReference type="MINT" id="P40487"/>
<dbReference type="STRING" id="4932.YIL103W"/>
<dbReference type="iPTMnet" id="P40487"/>
<dbReference type="PaxDb" id="4932-YIL103W"/>
<dbReference type="PeptideAtlas" id="P40487"/>
<dbReference type="EnsemblFungi" id="YIL103W_mRNA">
    <property type="protein sequence ID" value="YIL103W"/>
    <property type="gene ID" value="YIL103W"/>
</dbReference>
<dbReference type="GeneID" id="854703"/>
<dbReference type="KEGG" id="sce:YIL103W"/>
<dbReference type="AGR" id="SGD:S000001365"/>
<dbReference type="SGD" id="S000001365">
    <property type="gene designation" value="DPH1"/>
</dbReference>
<dbReference type="VEuPathDB" id="FungiDB:YIL103W"/>
<dbReference type="eggNOG" id="KOG2648">
    <property type="taxonomic scope" value="Eukaryota"/>
</dbReference>
<dbReference type="GeneTree" id="ENSGT00940000153694"/>
<dbReference type="HOGENOM" id="CLU_037146_1_1_1"/>
<dbReference type="InParanoid" id="P40487"/>
<dbReference type="OMA" id="PGQVLGC"/>
<dbReference type="OrthoDB" id="1649088at2759"/>
<dbReference type="BioCyc" id="MetaCyc:MONOMER-15578"/>
<dbReference type="BioCyc" id="YEAST:MONOMER-15578"/>
<dbReference type="Reactome" id="R-SCE-5358493">
    <property type="pathway name" value="Synthesis of diphthamide-EEF2"/>
</dbReference>
<dbReference type="UniPathway" id="UPA00559"/>
<dbReference type="BioGRID-ORCS" id="854703">
    <property type="hits" value="3 hits in 10 CRISPR screens"/>
</dbReference>
<dbReference type="PRO" id="PR:P40487"/>
<dbReference type="Proteomes" id="UP000002311">
    <property type="component" value="Chromosome IX"/>
</dbReference>
<dbReference type="RNAct" id="P40487">
    <property type="molecule type" value="protein"/>
</dbReference>
<dbReference type="GO" id="GO:0120513">
    <property type="term" value="C:2-(3-amino-3-carboxypropyl)histidine synthase complex"/>
    <property type="evidence" value="ECO:0000314"/>
    <property type="project" value="UniProtKB"/>
</dbReference>
<dbReference type="GO" id="GO:0005737">
    <property type="term" value="C:cytoplasm"/>
    <property type="evidence" value="ECO:0007005"/>
    <property type="project" value="SGD"/>
</dbReference>
<dbReference type="GO" id="GO:0090560">
    <property type="term" value="F:2-(3-amino-3-carboxypropyl)histidine synthase activity"/>
    <property type="evidence" value="ECO:0007669"/>
    <property type="project" value="UniProtKB-EC"/>
</dbReference>
<dbReference type="GO" id="GO:0051539">
    <property type="term" value="F:4 iron, 4 sulfur cluster binding"/>
    <property type="evidence" value="ECO:0000314"/>
    <property type="project" value="UniProtKB"/>
</dbReference>
<dbReference type="GO" id="GO:0046872">
    <property type="term" value="F:metal ion binding"/>
    <property type="evidence" value="ECO:0007669"/>
    <property type="project" value="UniProtKB-KW"/>
</dbReference>
<dbReference type="GO" id="GO:0017183">
    <property type="term" value="P:protein histidyl modification to diphthamide"/>
    <property type="evidence" value="ECO:0000314"/>
    <property type="project" value="UniProtKB"/>
</dbReference>
<dbReference type="FunFam" id="3.40.50.11840:FF:000001">
    <property type="entry name" value="2-(3-amino-3-carboxypropyl)histidine synthase subunit 1"/>
    <property type="match status" value="1"/>
</dbReference>
<dbReference type="FunFam" id="3.40.50.11850:FF:000001">
    <property type="entry name" value="2-(3-amino-3-carboxypropyl)histidine synthase subunit 1"/>
    <property type="match status" value="1"/>
</dbReference>
<dbReference type="FunFam" id="3.40.50.11860:FF:000002">
    <property type="entry name" value="2-(3-amino-3-carboxypropyl)histidine synthase subunit 1"/>
    <property type="match status" value="1"/>
</dbReference>
<dbReference type="Gene3D" id="3.40.50.11840">
    <property type="entry name" value="Diphthamide synthesis DPH1/DPH2 domain 1"/>
    <property type="match status" value="1"/>
</dbReference>
<dbReference type="Gene3D" id="3.40.50.11850">
    <property type="entry name" value="Diphthamide synthesis DPH1/DPH2 domain 2"/>
    <property type="match status" value="1"/>
</dbReference>
<dbReference type="Gene3D" id="3.40.50.11860">
    <property type="entry name" value="Diphthamide synthesis DPH1/DPH2 domain 3"/>
    <property type="match status" value="1"/>
</dbReference>
<dbReference type="InterPro" id="IPR016435">
    <property type="entry name" value="DPH1/DPH2"/>
</dbReference>
<dbReference type="InterPro" id="IPR042263">
    <property type="entry name" value="DPH1/DPH2_1"/>
</dbReference>
<dbReference type="InterPro" id="IPR042264">
    <property type="entry name" value="DPH1/DPH2_2"/>
</dbReference>
<dbReference type="InterPro" id="IPR042265">
    <property type="entry name" value="DPH1/DPH2_3"/>
</dbReference>
<dbReference type="InterPro" id="IPR035435">
    <property type="entry name" value="DPH1/DPH2_euk_archaea"/>
</dbReference>
<dbReference type="NCBIfam" id="TIGR00322">
    <property type="entry name" value="diphth2_R"/>
    <property type="match status" value="1"/>
</dbReference>
<dbReference type="PANTHER" id="PTHR10762:SF1">
    <property type="entry name" value="2-(3-AMINO-3-CARBOXYPROPYL)HISTIDINE SYNTHASE SUBUNIT 1"/>
    <property type="match status" value="1"/>
</dbReference>
<dbReference type="PANTHER" id="PTHR10762">
    <property type="entry name" value="DIPHTHAMIDE BIOSYNTHESIS PROTEIN"/>
    <property type="match status" value="1"/>
</dbReference>
<dbReference type="Pfam" id="PF01866">
    <property type="entry name" value="Diphthamide_syn"/>
    <property type="match status" value="1"/>
</dbReference>
<dbReference type="PIRSF" id="PIRSF004967">
    <property type="entry name" value="DPH1"/>
    <property type="match status" value="1"/>
</dbReference>
<dbReference type="SFLD" id="SFLDG01121">
    <property type="entry name" value="Diphthamide_biosynthesis"/>
    <property type="match status" value="1"/>
</dbReference>
<dbReference type="SFLD" id="SFLDS00032">
    <property type="entry name" value="Radical_SAM_3-amino-3-carboxyp"/>
    <property type="match status" value="1"/>
</dbReference>
<gene>
    <name type="primary">DPH1</name>
    <name type="ordered locus">YIL103W</name>
</gene>
<name>DPH1_YEAST</name>
<sequence>MSGSTESKKQPRRRFIGRKSGNSNNDKLTTVAENGNEIIHKQKSRIALGRSVNHVPEDILNDKELNEAIKLLPSNYNFEIHKTVWNIRKYNAKRIALQMPEGLLIYSLIISDILEQFCGVETLVMGDVSYGACCIDDFTARALDCDFIVHYAHSCLVPIDVTKIKVLYVFVTINIQEDHIIKTLQKNFPKGSRIATFGTIQFNPAVHSVRDKLLNDEEHMLYIIPPQIKPLSRGEVLGCTSERLDKEQYDAMVFIGDGRFHLESAMIHNPEIPAFKYDPYNRKFTREGYDQKQLVEVRAEAIEVARKGKVFGLILGALGRQGNLNTVKNLEKNLIAAGKTVVKIILSEVFPQKLAMFDQIDVFVQVACPRLSIDWGYAFNKPLLTPYEASVLLKKDVMFSEKYYPMDYYEAKGYGRGETPKHAIE</sequence>
<accession>P40487</accession>
<accession>D6VVI4</accession>